<dbReference type="EMBL" id="AC051630">
    <property type="protein sequence ID" value="AAG51210.1"/>
    <property type="status" value="ALT_SEQ"/>
    <property type="molecule type" value="Genomic_DNA"/>
</dbReference>
<dbReference type="EMBL" id="CP002684">
    <property type="protein sequence ID" value="AEE31595.1"/>
    <property type="molecule type" value="Genomic_DNA"/>
</dbReference>
<dbReference type="EMBL" id="AK221617">
    <property type="protein sequence ID" value="BAD95216.1"/>
    <property type="molecule type" value="mRNA"/>
</dbReference>
<dbReference type="PIR" id="B86458">
    <property type="entry name" value="B86458"/>
</dbReference>
<dbReference type="RefSeq" id="NP_174610.2">
    <property type="nucleotide sequence ID" value="NM_103069.4"/>
</dbReference>
<dbReference type="SMR" id="Q56XQ6"/>
<dbReference type="STRING" id="3702.Q56XQ6"/>
<dbReference type="TCDB" id="2.A.17.3.24">
    <property type="family name" value="the proton-dependent oligopeptide transporter (pot/ptr) family"/>
</dbReference>
<dbReference type="iPTMnet" id="Q56XQ6"/>
<dbReference type="PaxDb" id="3702-AT1G33440.1"/>
<dbReference type="ProteomicsDB" id="226424"/>
<dbReference type="EnsemblPlants" id="AT1G33440.1">
    <property type="protein sequence ID" value="AT1G33440.1"/>
    <property type="gene ID" value="AT1G33440"/>
</dbReference>
<dbReference type="GeneID" id="840237"/>
<dbReference type="Gramene" id="AT1G33440.1">
    <property type="protein sequence ID" value="AT1G33440.1"/>
    <property type="gene ID" value="AT1G33440"/>
</dbReference>
<dbReference type="KEGG" id="ath:AT1G33440"/>
<dbReference type="Araport" id="AT1G33440"/>
<dbReference type="TAIR" id="AT1G33440">
    <property type="gene designation" value="NPF4.4"/>
</dbReference>
<dbReference type="eggNOG" id="KOG1237">
    <property type="taxonomic scope" value="Eukaryota"/>
</dbReference>
<dbReference type="HOGENOM" id="CLU_009313_4_0_1"/>
<dbReference type="InParanoid" id="Q56XQ6"/>
<dbReference type="OMA" id="FNCAYFA"/>
<dbReference type="PhylomeDB" id="Q56XQ6"/>
<dbReference type="PRO" id="PR:Q56XQ6"/>
<dbReference type="Proteomes" id="UP000006548">
    <property type="component" value="Chromosome 1"/>
</dbReference>
<dbReference type="ExpressionAtlas" id="Q56XQ6">
    <property type="expression patterns" value="baseline and differential"/>
</dbReference>
<dbReference type="GO" id="GO:0016020">
    <property type="term" value="C:membrane"/>
    <property type="evidence" value="ECO:0007669"/>
    <property type="project" value="UniProtKB-SubCell"/>
</dbReference>
<dbReference type="GO" id="GO:0022857">
    <property type="term" value="F:transmembrane transporter activity"/>
    <property type="evidence" value="ECO:0007669"/>
    <property type="project" value="InterPro"/>
</dbReference>
<dbReference type="CDD" id="cd17414">
    <property type="entry name" value="MFS_NPF4"/>
    <property type="match status" value="1"/>
</dbReference>
<dbReference type="Gene3D" id="1.20.1250.20">
    <property type="entry name" value="MFS general substrate transporter like domains"/>
    <property type="match status" value="1"/>
</dbReference>
<dbReference type="InterPro" id="IPR036259">
    <property type="entry name" value="MFS_trans_sf"/>
</dbReference>
<dbReference type="InterPro" id="IPR000109">
    <property type="entry name" value="POT_fam"/>
</dbReference>
<dbReference type="PANTHER" id="PTHR11654">
    <property type="entry name" value="OLIGOPEPTIDE TRANSPORTER-RELATED"/>
    <property type="match status" value="1"/>
</dbReference>
<dbReference type="Pfam" id="PF00854">
    <property type="entry name" value="PTR2"/>
    <property type="match status" value="1"/>
</dbReference>
<dbReference type="SUPFAM" id="SSF103473">
    <property type="entry name" value="MFS general substrate transporter"/>
    <property type="match status" value="1"/>
</dbReference>
<accession>Q56XQ6</accession>
<accession>Q9C808</accession>
<organism>
    <name type="scientific">Arabidopsis thaliana</name>
    <name type="common">Mouse-ear cress</name>
    <dbReference type="NCBI Taxonomy" id="3702"/>
    <lineage>
        <taxon>Eukaryota</taxon>
        <taxon>Viridiplantae</taxon>
        <taxon>Streptophyta</taxon>
        <taxon>Embryophyta</taxon>
        <taxon>Tracheophyta</taxon>
        <taxon>Spermatophyta</taxon>
        <taxon>Magnoliopsida</taxon>
        <taxon>eudicotyledons</taxon>
        <taxon>Gunneridae</taxon>
        <taxon>Pentapetalae</taxon>
        <taxon>rosids</taxon>
        <taxon>malvids</taxon>
        <taxon>Brassicales</taxon>
        <taxon>Brassicaceae</taxon>
        <taxon>Camelineae</taxon>
        <taxon>Arabidopsis</taxon>
    </lineage>
</organism>
<proteinExistence type="evidence at transcript level"/>
<name>PTR15_ARATH</name>
<sequence length="601" mass="66705">MDVHDLSEEAKRGVIHTSEESLDDLCVDFRGRPCRPSKHGGTRAALFVLGFQAFEMMAIAAVGNNLITYVFNEMHFPLSKSANLVTNFIGTVFLLSLLGGFLSDSYLGSFRTMLVFGVIEISGFILLSVQAHLPELRPPECNMKSTTIHCVEANGYKAATLYTALCLVALGSGCLKPNIISHGANQFQRKDLRKLSSFFNAAYFAFSMGQLIALTLLVWVQTHSGMDVGFGVSAAVMAAGMISLVAGTSFYRNKPPSGSIFTPIAQVFVAAITKRKQICPSNPNMVHQPSTDLVRVKPLLHSNKFRFLDKACIKTQGKAMESPWRLCTIEQVHQVKILLSVIPIFACTIIFNTILAQLQTFSVQQGSSMNTHITKTFQIPPASLQAIPYIILIFFVPLYETFFVPLARKLTGNDSGISPLQRIGTGLFLATFSMVAAALVEKKRRESFLEQNVMLSIFWIAPQFLIFGLSEMFTAVGLVEFFYKQSSQSMQSFLTAMTYCSYSFGFYLSSVLVSTVNRVTSSNGSGTKEGWLGDNDLNKDRLDHFYWLLASLSFINFFNYLFWSRWYSCDPSATHHSAEVNSLEALENGEIKDSTTEKPRI</sequence>
<evidence type="ECO:0000250" key="1"/>
<evidence type="ECO:0000250" key="2">
    <source>
        <dbReference type="UniProtKB" id="Q05085"/>
    </source>
</evidence>
<evidence type="ECO:0000255" key="3"/>
<evidence type="ECO:0000269" key="4">
    <source>
    </source>
</evidence>
<evidence type="ECO:0000305" key="5"/>
<protein>
    <recommendedName>
        <fullName>Protein NRT1/ PTR FAMILY 4.4</fullName>
        <shortName>AtNPF4.4</shortName>
    </recommendedName>
    <alternativeName>
        <fullName>Nitrate transporter 1.13</fullName>
    </alternativeName>
</protein>
<reference key="1">
    <citation type="journal article" date="2000" name="Nature">
        <title>Sequence and analysis of chromosome 1 of the plant Arabidopsis thaliana.</title>
        <authorList>
            <person name="Theologis A."/>
            <person name="Ecker J.R."/>
            <person name="Palm C.J."/>
            <person name="Federspiel N.A."/>
            <person name="Kaul S."/>
            <person name="White O."/>
            <person name="Alonso J."/>
            <person name="Altafi H."/>
            <person name="Araujo R."/>
            <person name="Bowman C.L."/>
            <person name="Brooks S.Y."/>
            <person name="Buehler E."/>
            <person name="Chan A."/>
            <person name="Chao Q."/>
            <person name="Chen H."/>
            <person name="Cheuk R.F."/>
            <person name="Chin C.W."/>
            <person name="Chung M.K."/>
            <person name="Conn L."/>
            <person name="Conway A.B."/>
            <person name="Conway A.R."/>
            <person name="Creasy T.H."/>
            <person name="Dewar K."/>
            <person name="Dunn P."/>
            <person name="Etgu P."/>
            <person name="Feldblyum T.V."/>
            <person name="Feng J.-D."/>
            <person name="Fong B."/>
            <person name="Fujii C.Y."/>
            <person name="Gill J.E."/>
            <person name="Goldsmith A.D."/>
            <person name="Haas B."/>
            <person name="Hansen N.F."/>
            <person name="Hughes B."/>
            <person name="Huizar L."/>
            <person name="Hunter J.L."/>
            <person name="Jenkins J."/>
            <person name="Johnson-Hopson C."/>
            <person name="Khan S."/>
            <person name="Khaykin E."/>
            <person name="Kim C.J."/>
            <person name="Koo H.L."/>
            <person name="Kremenetskaia I."/>
            <person name="Kurtz D.B."/>
            <person name="Kwan A."/>
            <person name="Lam B."/>
            <person name="Langin-Hooper S."/>
            <person name="Lee A."/>
            <person name="Lee J.M."/>
            <person name="Lenz C.A."/>
            <person name="Li J.H."/>
            <person name="Li Y.-P."/>
            <person name="Lin X."/>
            <person name="Liu S.X."/>
            <person name="Liu Z.A."/>
            <person name="Luros J.S."/>
            <person name="Maiti R."/>
            <person name="Marziali A."/>
            <person name="Militscher J."/>
            <person name="Miranda M."/>
            <person name="Nguyen M."/>
            <person name="Nierman W.C."/>
            <person name="Osborne B.I."/>
            <person name="Pai G."/>
            <person name="Peterson J."/>
            <person name="Pham P.K."/>
            <person name="Rizzo M."/>
            <person name="Rooney T."/>
            <person name="Rowley D."/>
            <person name="Sakano H."/>
            <person name="Salzberg S.L."/>
            <person name="Schwartz J.R."/>
            <person name="Shinn P."/>
            <person name="Southwick A.M."/>
            <person name="Sun H."/>
            <person name="Tallon L.J."/>
            <person name="Tambunga G."/>
            <person name="Toriumi M.J."/>
            <person name="Town C.D."/>
            <person name="Utterback T."/>
            <person name="Van Aken S."/>
            <person name="Vaysberg M."/>
            <person name="Vysotskaia V.S."/>
            <person name="Walker M."/>
            <person name="Wu D."/>
            <person name="Yu G."/>
            <person name="Fraser C.M."/>
            <person name="Venter J.C."/>
            <person name="Davis R.W."/>
        </authorList>
    </citation>
    <scope>NUCLEOTIDE SEQUENCE [LARGE SCALE GENOMIC DNA]</scope>
    <source>
        <strain>cv. Columbia</strain>
    </source>
</reference>
<reference key="2">
    <citation type="journal article" date="2017" name="Plant J.">
        <title>Araport11: a complete reannotation of the Arabidopsis thaliana reference genome.</title>
        <authorList>
            <person name="Cheng C.Y."/>
            <person name="Krishnakumar V."/>
            <person name="Chan A.P."/>
            <person name="Thibaud-Nissen F."/>
            <person name="Schobel S."/>
            <person name="Town C.D."/>
        </authorList>
    </citation>
    <scope>GENOME REANNOTATION</scope>
    <source>
        <strain>cv. Columbia</strain>
    </source>
</reference>
<reference key="3">
    <citation type="submission" date="2005-03" db="EMBL/GenBank/DDBJ databases">
        <title>Large-scale analysis of RIKEN Arabidopsis full-length (RAFL) cDNAs.</title>
        <authorList>
            <person name="Totoki Y."/>
            <person name="Seki M."/>
            <person name="Ishida J."/>
            <person name="Nakajima M."/>
            <person name="Enju A."/>
            <person name="Kamiya A."/>
            <person name="Narusaka M."/>
            <person name="Shin-i T."/>
            <person name="Nakagawa M."/>
            <person name="Sakamoto N."/>
            <person name="Oishi K."/>
            <person name="Kohara Y."/>
            <person name="Kobayashi M."/>
            <person name="Toyoda A."/>
            <person name="Sakaki Y."/>
            <person name="Sakurai T."/>
            <person name="Iida K."/>
            <person name="Akiyama K."/>
            <person name="Satou M."/>
            <person name="Toyoda T."/>
            <person name="Konagaya A."/>
            <person name="Carninci P."/>
            <person name="Kawai J."/>
            <person name="Hayashizaki Y."/>
            <person name="Shinozaki K."/>
        </authorList>
    </citation>
    <scope>NUCLEOTIDE SEQUENCE [LARGE SCALE MRNA]</scope>
    <source>
        <strain>cv. Columbia</strain>
    </source>
</reference>
<reference key="4">
    <citation type="journal article" date="2007" name="FEBS Lett.">
        <title>Nitrate transporters and peptide transporters.</title>
        <authorList>
            <person name="Tsay Y.F."/>
            <person name="Chiu C.C."/>
            <person name="Tsai C.B."/>
            <person name="Ho C.H."/>
            <person name="Hsu P.K."/>
        </authorList>
    </citation>
    <scope>TISSUE SPECIFICITY</scope>
    <scope>GENE FAMILY</scope>
</reference>
<reference key="5">
    <citation type="journal article" date="2010" name="Plant Cell">
        <title>The Arabidopsis nitrate transporter NRT1.8 functions in nitrate removal from the xylem sap and mediates cadmium tolerance.</title>
        <authorList>
            <person name="Li J.Y."/>
            <person name="Fu Y.L."/>
            <person name="Pike S.M."/>
            <person name="Bao J."/>
            <person name="Tian W."/>
            <person name="Zhang Y."/>
            <person name="Chen C.Z."/>
            <person name="Zhang Y."/>
            <person name="Li H.M."/>
            <person name="Huang J."/>
            <person name="Li L.G."/>
            <person name="Schroeder J.I."/>
            <person name="Gassmann W."/>
            <person name="Gong J.M."/>
        </authorList>
    </citation>
    <scope>GENE FAMILY</scope>
</reference>
<reference key="6">
    <citation type="journal article" date="2014" name="Trends Plant Sci.">
        <title>A unified nomenclature of NITRATE TRANSPORTER 1/PEPTIDE TRANSPORTER family members in plants.</title>
        <authorList>
            <person name="Leran S."/>
            <person name="Varala K."/>
            <person name="Boyer J.C."/>
            <person name="Chiurazzi M."/>
            <person name="Crawford N."/>
            <person name="Daniel-Vedele F."/>
            <person name="David L."/>
            <person name="Dickstein R."/>
            <person name="Fernandez E."/>
            <person name="Forde B."/>
            <person name="Gassmann W."/>
            <person name="Geiger D."/>
            <person name="Gojon A."/>
            <person name="Gong J.M."/>
            <person name="Halkier B.A."/>
            <person name="Harris J.M."/>
            <person name="Hedrich R."/>
            <person name="Limami A.M."/>
            <person name="Rentsch D."/>
            <person name="Seo M."/>
            <person name="Tsay Y.F."/>
            <person name="Zhang M."/>
            <person name="Coruzzi G."/>
            <person name="Lacombe B."/>
        </authorList>
    </citation>
    <scope>GENE FAMILY</scope>
    <scope>NOMENCLATURE</scope>
</reference>
<comment type="subcellular location">
    <subcellularLocation>
        <location evidence="1">Membrane</location>
        <topology evidence="1">Multi-pass membrane protein</topology>
    </subcellularLocation>
</comment>
<comment type="tissue specificity">
    <text evidence="4">Expressed in shoots, roots and stems.</text>
</comment>
<comment type="similarity">
    <text evidence="5">Belongs to the major facilitator superfamily. Proton-dependent oligopeptide transporter (POT/PTR) (TC 2.A.17) family.</text>
</comment>
<comment type="sequence caution" evidence="5">
    <conflict type="erroneous gene model prediction">
        <sequence resource="EMBL-CDS" id="AAG51210"/>
    </conflict>
</comment>
<gene>
    <name type="primary">NPF4.4</name>
    <name type="synonym">NRT1.13</name>
    <name type="ordered locus">At1g33440</name>
    <name type="ORF">F10C21.11</name>
</gene>
<feature type="chain" id="PRO_0000399949" description="Protein NRT1/ PTR FAMILY 4.4">
    <location>
        <begin position="1"/>
        <end position="601"/>
    </location>
</feature>
<feature type="transmembrane region" description="Helical" evidence="3">
    <location>
        <begin position="44"/>
        <end position="64"/>
    </location>
</feature>
<feature type="transmembrane region" description="Helical" evidence="3">
    <location>
        <begin position="82"/>
        <end position="102"/>
    </location>
</feature>
<feature type="transmembrane region" description="Helical" evidence="3">
    <location>
        <begin position="113"/>
        <end position="133"/>
    </location>
</feature>
<feature type="transmembrane region" description="Helical" evidence="3">
    <location>
        <begin position="160"/>
        <end position="180"/>
    </location>
</feature>
<feature type="transmembrane region" description="Helical" evidence="3">
    <location>
        <begin position="198"/>
        <end position="218"/>
    </location>
</feature>
<feature type="transmembrane region" description="Helical" evidence="3">
    <location>
        <begin position="228"/>
        <end position="248"/>
    </location>
</feature>
<feature type="transmembrane region" description="Helical" evidence="3">
    <location>
        <begin position="337"/>
        <end position="357"/>
    </location>
</feature>
<feature type="transmembrane region" description="Helical" evidence="3">
    <location>
        <begin position="386"/>
        <end position="406"/>
    </location>
</feature>
<feature type="transmembrane region" description="Helical" evidence="3">
    <location>
        <begin position="420"/>
        <end position="440"/>
    </location>
</feature>
<feature type="transmembrane region" description="Helical" evidence="3">
    <location>
        <begin position="453"/>
        <end position="473"/>
    </location>
</feature>
<feature type="transmembrane region" description="Helical" evidence="3">
    <location>
        <begin position="493"/>
        <end position="513"/>
    </location>
</feature>
<feature type="transmembrane region" description="Helical" evidence="3">
    <location>
        <begin position="544"/>
        <end position="564"/>
    </location>
</feature>
<feature type="modified residue" description="Phosphothreonine" evidence="2">
    <location>
        <position position="112"/>
    </location>
</feature>
<keyword id="KW-0472">Membrane</keyword>
<keyword id="KW-0597">Phosphoprotein</keyword>
<keyword id="KW-1185">Reference proteome</keyword>
<keyword id="KW-0812">Transmembrane</keyword>
<keyword id="KW-1133">Transmembrane helix</keyword>
<keyword id="KW-0813">Transport</keyword>